<sequence>MKDVIYVALGGAVGSVLRYWVGIVTIRLFGPFLPWGTFSVNLIGSFCIGLFAEMIARKFDASADLRMLLITGLLGGFTTFSAFMLDTVSLAERGDLLWPAFYVAASIGFGVGAVFAGLAVGRWLF</sequence>
<accession>B9JWI7</accession>
<reference key="1">
    <citation type="journal article" date="2009" name="J. Bacteriol.">
        <title>Genome sequences of three Agrobacterium biovars help elucidate the evolution of multichromosome genomes in bacteria.</title>
        <authorList>
            <person name="Slater S.C."/>
            <person name="Goldman B.S."/>
            <person name="Goodner B."/>
            <person name="Setubal J.C."/>
            <person name="Farrand S.K."/>
            <person name="Nester E.W."/>
            <person name="Burr T.J."/>
            <person name="Banta L."/>
            <person name="Dickerman A.W."/>
            <person name="Paulsen I."/>
            <person name="Otten L."/>
            <person name="Suen G."/>
            <person name="Welch R."/>
            <person name="Almeida N.F."/>
            <person name="Arnold F."/>
            <person name="Burton O.T."/>
            <person name="Du Z."/>
            <person name="Ewing A."/>
            <person name="Godsy E."/>
            <person name="Heisel S."/>
            <person name="Houmiel K.L."/>
            <person name="Jhaveri J."/>
            <person name="Lu J."/>
            <person name="Miller N.M."/>
            <person name="Norton S."/>
            <person name="Chen Q."/>
            <person name="Phoolcharoen W."/>
            <person name="Ohlin V."/>
            <person name="Ondrusek D."/>
            <person name="Pride N."/>
            <person name="Stricklin S.L."/>
            <person name="Sun J."/>
            <person name="Wheeler C."/>
            <person name="Wilson L."/>
            <person name="Zhu H."/>
            <person name="Wood D.W."/>
        </authorList>
    </citation>
    <scope>NUCLEOTIDE SEQUENCE [LARGE SCALE GENOMIC DNA]</scope>
    <source>
        <strain>ATCC BAA-846 / DSM 112012 / S4</strain>
    </source>
</reference>
<feature type="chain" id="PRO_1000135312" description="Fluoride-specific ion channel FluC">
    <location>
        <begin position="1"/>
        <end position="125"/>
    </location>
</feature>
<feature type="transmembrane region" description="Helical" evidence="1">
    <location>
        <begin position="4"/>
        <end position="24"/>
    </location>
</feature>
<feature type="transmembrane region" description="Helical" evidence="1">
    <location>
        <begin position="32"/>
        <end position="52"/>
    </location>
</feature>
<feature type="transmembrane region" description="Helical" evidence="1">
    <location>
        <begin position="68"/>
        <end position="88"/>
    </location>
</feature>
<feature type="transmembrane region" description="Helical" evidence="1">
    <location>
        <begin position="100"/>
        <end position="120"/>
    </location>
</feature>
<feature type="binding site" evidence="1">
    <location>
        <position position="75"/>
    </location>
    <ligand>
        <name>Na(+)</name>
        <dbReference type="ChEBI" id="CHEBI:29101"/>
        <note>structural</note>
    </ligand>
</feature>
<feature type="binding site" evidence="1">
    <location>
        <position position="78"/>
    </location>
    <ligand>
        <name>Na(+)</name>
        <dbReference type="ChEBI" id="CHEBI:29101"/>
        <note>structural</note>
    </ligand>
</feature>
<evidence type="ECO:0000255" key="1">
    <source>
        <dbReference type="HAMAP-Rule" id="MF_00454"/>
    </source>
</evidence>
<gene>
    <name evidence="1" type="primary">fluC</name>
    <name evidence="1" type="synonym">crcB</name>
    <name type="ordered locus">Avi_2259</name>
</gene>
<name>FLUC_ALLAM</name>
<dbReference type="EMBL" id="CP000633">
    <property type="protein sequence ID" value="ACM36615.1"/>
    <property type="molecule type" value="Genomic_DNA"/>
</dbReference>
<dbReference type="RefSeq" id="WP_015916036.1">
    <property type="nucleotide sequence ID" value="NC_011989.1"/>
</dbReference>
<dbReference type="SMR" id="B9JWI7"/>
<dbReference type="STRING" id="311402.Avi_2259"/>
<dbReference type="KEGG" id="avi:Avi_2259"/>
<dbReference type="eggNOG" id="COG0239">
    <property type="taxonomic scope" value="Bacteria"/>
</dbReference>
<dbReference type="HOGENOM" id="CLU_114342_2_3_5"/>
<dbReference type="Proteomes" id="UP000001596">
    <property type="component" value="Chromosome 1"/>
</dbReference>
<dbReference type="GO" id="GO:0005886">
    <property type="term" value="C:plasma membrane"/>
    <property type="evidence" value="ECO:0007669"/>
    <property type="project" value="UniProtKB-SubCell"/>
</dbReference>
<dbReference type="GO" id="GO:0062054">
    <property type="term" value="F:fluoride channel activity"/>
    <property type="evidence" value="ECO:0007669"/>
    <property type="project" value="UniProtKB-UniRule"/>
</dbReference>
<dbReference type="GO" id="GO:0046872">
    <property type="term" value="F:metal ion binding"/>
    <property type="evidence" value="ECO:0007669"/>
    <property type="project" value="UniProtKB-KW"/>
</dbReference>
<dbReference type="GO" id="GO:0140114">
    <property type="term" value="P:cellular detoxification of fluoride"/>
    <property type="evidence" value="ECO:0007669"/>
    <property type="project" value="UniProtKB-UniRule"/>
</dbReference>
<dbReference type="HAMAP" id="MF_00454">
    <property type="entry name" value="FluC"/>
    <property type="match status" value="1"/>
</dbReference>
<dbReference type="InterPro" id="IPR003691">
    <property type="entry name" value="FluC"/>
</dbReference>
<dbReference type="NCBIfam" id="TIGR00494">
    <property type="entry name" value="crcB"/>
    <property type="match status" value="1"/>
</dbReference>
<dbReference type="NCBIfam" id="NF010791">
    <property type="entry name" value="PRK14195.1"/>
    <property type="match status" value="1"/>
</dbReference>
<dbReference type="PANTHER" id="PTHR28259">
    <property type="entry name" value="FLUORIDE EXPORT PROTEIN 1-RELATED"/>
    <property type="match status" value="1"/>
</dbReference>
<dbReference type="PANTHER" id="PTHR28259:SF18">
    <property type="entry name" value="FLUORIDE-SPECIFIC ION CHANNEL FLUC"/>
    <property type="match status" value="1"/>
</dbReference>
<dbReference type="Pfam" id="PF02537">
    <property type="entry name" value="CRCB"/>
    <property type="match status" value="1"/>
</dbReference>
<protein>
    <recommendedName>
        <fullName evidence="1">Fluoride-specific ion channel FluC</fullName>
    </recommendedName>
</protein>
<proteinExistence type="inferred from homology"/>
<organism>
    <name type="scientific">Allorhizobium ampelinum (strain ATCC BAA-846 / DSM 112012 / S4)</name>
    <name type="common">Agrobacterium vitis (strain S4)</name>
    <dbReference type="NCBI Taxonomy" id="311402"/>
    <lineage>
        <taxon>Bacteria</taxon>
        <taxon>Pseudomonadati</taxon>
        <taxon>Pseudomonadota</taxon>
        <taxon>Alphaproteobacteria</taxon>
        <taxon>Hyphomicrobiales</taxon>
        <taxon>Rhizobiaceae</taxon>
        <taxon>Rhizobium/Agrobacterium group</taxon>
        <taxon>Allorhizobium</taxon>
        <taxon>Allorhizobium ampelinum</taxon>
    </lineage>
</organism>
<keyword id="KW-0997">Cell inner membrane</keyword>
<keyword id="KW-1003">Cell membrane</keyword>
<keyword id="KW-0407">Ion channel</keyword>
<keyword id="KW-0406">Ion transport</keyword>
<keyword id="KW-0472">Membrane</keyword>
<keyword id="KW-0479">Metal-binding</keyword>
<keyword id="KW-1185">Reference proteome</keyword>
<keyword id="KW-0915">Sodium</keyword>
<keyword id="KW-0812">Transmembrane</keyword>
<keyword id="KW-1133">Transmembrane helix</keyword>
<keyword id="KW-0813">Transport</keyword>
<comment type="function">
    <text evidence="1">Fluoride-specific ion channel. Important for reducing fluoride concentration in the cell, thus reducing its toxicity.</text>
</comment>
<comment type="catalytic activity">
    <reaction evidence="1">
        <text>fluoride(in) = fluoride(out)</text>
        <dbReference type="Rhea" id="RHEA:76159"/>
        <dbReference type="ChEBI" id="CHEBI:17051"/>
    </reaction>
    <physiologicalReaction direction="left-to-right" evidence="1">
        <dbReference type="Rhea" id="RHEA:76160"/>
    </physiologicalReaction>
</comment>
<comment type="activity regulation">
    <text evidence="1">Na(+) is not transported, but it plays an essential structural role and its presence is essential for fluoride channel function.</text>
</comment>
<comment type="subcellular location">
    <subcellularLocation>
        <location evidence="1">Cell inner membrane</location>
        <topology evidence="1">Multi-pass membrane protein</topology>
    </subcellularLocation>
</comment>
<comment type="similarity">
    <text evidence="1">Belongs to the fluoride channel Fluc/FEX (TC 1.A.43) family.</text>
</comment>